<accession>A0KX28</accession>
<protein>
    <recommendedName>
        <fullName evidence="1">tRNA-cytidine(32) 2-sulfurtransferase</fullName>
        <ecNumber evidence="1">2.8.1.-</ecNumber>
    </recommendedName>
    <alternativeName>
        <fullName evidence="1">Two-thiocytidine biosynthesis protein A</fullName>
    </alternativeName>
    <alternativeName>
        <fullName evidence="1">tRNA 2-thiocytidine biosynthesis protein TtcA</fullName>
    </alternativeName>
</protein>
<sequence>MPEELSKKQITRLNKLQKRLRREVGSAIADYNMIEDGDRVMCCLSGGKDSYAMLDILLNLQQRAPVQFEIIAVNLDQKQPGFPEHVLPAYLDSLNIPYHILEKDTYSIVKEKIPEGKTTCSLCSRLRRGTLYGFAQRIGATKIALGHHRDDIIETMFLNMFYGGKMKAMPPKLLSDDGANVVIRPLAYCREKDLEEYAELKKFPIIPCNLCGSQENLKRQAVKDMLNQWDRLYPGRIETIFTAMQNTAPSQGVDREQFDFVSLKRDPNAPMKGDVAEADLPAFDFLDIANSGHIDLDAAKRINIVNVYEA</sequence>
<organism>
    <name type="scientific">Shewanella sp. (strain ANA-3)</name>
    <dbReference type="NCBI Taxonomy" id="94122"/>
    <lineage>
        <taxon>Bacteria</taxon>
        <taxon>Pseudomonadati</taxon>
        <taxon>Pseudomonadota</taxon>
        <taxon>Gammaproteobacteria</taxon>
        <taxon>Alteromonadales</taxon>
        <taxon>Shewanellaceae</taxon>
        <taxon>Shewanella</taxon>
    </lineage>
</organism>
<gene>
    <name evidence="1" type="primary">ttcA</name>
    <name type="ordered locus">Shewana3_2117</name>
</gene>
<name>TTCA_SHESA</name>
<proteinExistence type="inferred from homology"/>
<reference key="1">
    <citation type="submission" date="2006-09" db="EMBL/GenBank/DDBJ databases">
        <title>Complete sequence of chromosome 1 of Shewanella sp. ANA-3.</title>
        <authorList>
            <person name="Copeland A."/>
            <person name="Lucas S."/>
            <person name="Lapidus A."/>
            <person name="Barry K."/>
            <person name="Detter J.C."/>
            <person name="Glavina del Rio T."/>
            <person name="Hammon N."/>
            <person name="Israni S."/>
            <person name="Dalin E."/>
            <person name="Tice H."/>
            <person name="Pitluck S."/>
            <person name="Chertkov O."/>
            <person name="Brettin T."/>
            <person name="Bruce D."/>
            <person name="Han C."/>
            <person name="Tapia R."/>
            <person name="Gilna P."/>
            <person name="Schmutz J."/>
            <person name="Larimer F."/>
            <person name="Land M."/>
            <person name="Hauser L."/>
            <person name="Kyrpides N."/>
            <person name="Kim E."/>
            <person name="Newman D."/>
            <person name="Salticov C."/>
            <person name="Konstantinidis K."/>
            <person name="Klappenback J."/>
            <person name="Tiedje J."/>
            <person name="Richardson P."/>
        </authorList>
    </citation>
    <scope>NUCLEOTIDE SEQUENCE [LARGE SCALE GENOMIC DNA]</scope>
    <source>
        <strain>ANA-3</strain>
    </source>
</reference>
<comment type="function">
    <text evidence="1">Catalyzes the ATP-dependent 2-thiolation of cytidine in position 32 of tRNA, to form 2-thiocytidine (s(2)C32). The sulfur atoms are provided by the cysteine/cysteine desulfurase (IscS) system.</text>
</comment>
<comment type="catalytic activity">
    <reaction evidence="1">
        <text>cytidine(32) in tRNA + S-sulfanyl-L-cysteinyl-[cysteine desulfurase] + AH2 + ATP = 2-thiocytidine(32) in tRNA + L-cysteinyl-[cysteine desulfurase] + A + AMP + diphosphate + H(+)</text>
        <dbReference type="Rhea" id="RHEA:57048"/>
        <dbReference type="Rhea" id="RHEA-COMP:10288"/>
        <dbReference type="Rhea" id="RHEA-COMP:12157"/>
        <dbReference type="Rhea" id="RHEA-COMP:12158"/>
        <dbReference type="Rhea" id="RHEA-COMP:14821"/>
        <dbReference type="ChEBI" id="CHEBI:13193"/>
        <dbReference type="ChEBI" id="CHEBI:15378"/>
        <dbReference type="ChEBI" id="CHEBI:17499"/>
        <dbReference type="ChEBI" id="CHEBI:29950"/>
        <dbReference type="ChEBI" id="CHEBI:30616"/>
        <dbReference type="ChEBI" id="CHEBI:33019"/>
        <dbReference type="ChEBI" id="CHEBI:61963"/>
        <dbReference type="ChEBI" id="CHEBI:82748"/>
        <dbReference type="ChEBI" id="CHEBI:141453"/>
        <dbReference type="ChEBI" id="CHEBI:456215"/>
    </reaction>
    <physiologicalReaction direction="left-to-right" evidence="1">
        <dbReference type="Rhea" id="RHEA:57049"/>
    </physiologicalReaction>
</comment>
<comment type="cofactor">
    <cofactor evidence="1">
        <name>Mg(2+)</name>
        <dbReference type="ChEBI" id="CHEBI:18420"/>
    </cofactor>
</comment>
<comment type="cofactor">
    <cofactor evidence="1">
        <name>[4Fe-4S] cluster</name>
        <dbReference type="ChEBI" id="CHEBI:49883"/>
    </cofactor>
    <text evidence="1">Binds 1 [4Fe-4S] cluster per subunit. The cluster is chelated by three Cys residues, the fourth Fe has a free coordination site that may bind a sulfur atom transferred from the persulfide of IscS.</text>
</comment>
<comment type="pathway">
    <text evidence="1">tRNA modification.</text>
</comment>
<comment type="subunit">
    <text evidence="1">Homodimer.</text>
</comment>
<comment type="subcellular location">
    <subcellularLocation>
        <location evidence="1">Cytoplasm</location>
    </subcellularLocation>
</comment>
<comment type="miscellaneous">
    <text evidence="1">The thiolation reaction likely consists of two steps: a first activation step by ATP to form an adenylated intermediate of the target base of tRNA, and a second nucleophilic substitution step of the sulfur (S) atom supplied by the hydrosulfide attached to the Fe-S cluster.</text>
</comment>
<comment type="similarity">
    <text evidence="1">Belongs to the TtcA family.</text>
</comment>
<comment type="sequence caution" evidence="2">
    <conflict type="erroneous initiation">
        <sequence resource="EMBL-CDS" id="ABK48347"/>
    </conflict>
    <text>Extended N-terminus.</text>
</comment>
<dbReference type="EC" id="2.8.1.-" evidence="1"/>
<dbReference type="EMBL" id="CP000469">
    <property type="protein sequence ID" value="ABK48347.1"/>
    <property type="status" value="ALT_INIT"/>
    <property type="molecule type" value="Genomic_DNA"/>
</dbReference>
<dbReference type="SMR" id="A0KX28"/>
<dbReference type="STRING" id="94122.Shewana3_2117"/>
<dbReference type="KEGG" id="shn:Shewana3_2117"/>
<dbReference type="eggNOG" id="COG0037">
    <property type="taxonomic scope" value="Bacteria"/>
</dbReference>
<dbReference type="HOGENOM" id="CLU_026481_0_0_6"/>
<dbReference type="OrthoDB" id="9801054at2"/>
<dbReference type="Proteomes" id="UP000002589">
    <property type="component" value="Chromosome"/>
</dbReference>
<dbReference type="GO" id="GO:0005737">
    <property type="term" value="C:cytoplasm"/>
    <property type="evidence" value="ECO:0007669"/>
    <property type="project" value="UniProtKB-SubCell"/>
</dbReference>
<dbReference type="GO" id="GO:0051539">
    <property type="term" value="F:4 iron, 4 sulfur cluster binding"/>
    <property type="evidence" value="ECO:0007669"/>
    <property type="project" value="UniProtKB-UniRule"/>
</dbReference>
<dbReference type="GO" id="GO:0005524">
    <property type="term" value="F:ATP binding"/>
    <property type="evidence" value="ECO:0007669"/>
    <property type="project" value="UniProtKB-UniRule"/>
</dbReference>
<dbReference type="GO" id="GO:0000287">
    <property type="term" value="F:magnesium ion binding"/>
    <property type="evidence" value="ECO:0007669"/>
    <property type="project" value="UniProtKB-UniRule"/>
</dbReference>
<dbReference type="GO" id="GO:0016783">
    <property type="term" value="F:sulfurtransferase activity"/>
    <property type="evidence" value="ECO:0007669"/>
    <property type="project" value="UniProtKB-UniRule"/>
</dbReference>
<dbReference type="GO" id="GO:0000049">
    <property type="term" value="F:tRNA binding"/>
    <property type="evidence" value="ECO:0007669"/>
    <property type="project" value="UniProtKB-KW"/>
</dbReference>
<dbReference type="GO" id="GO:0034227">
    <property type="term" value="P:tRNA thio-modification"/>
    <property type="evidence" value="ECO:0007669"/>
    <property type="project" value="UniProtKB-UniRule"/>
</dbReference>
<dbReference type="CDD" id="cd24138">
    <property type="entry name" value="TtcA-like"/>
    <property type="match status" value="1"/>
</dbReference>
<dbReference type="Gene3D" id="3.40.50.620">
    <property type="entry name" value="HUPs"/>
    <property type="match status" value="1"/>
</dbReference>
<dbReference type="HAMAP" id="MF_01850">
    <property type="entry name" value="TtcA"/>
    <property type="match status" value="1"/>
</dbReference>
<dbReference type="InterPro" id="IPR014729">
    <property type="entry name" value="Rossmann-like_a/b/a_fold"/>
</dbReference>
<dbReference type="InterPro" id="IPR011063">
    <property type="entry name" value="TilS/TtcA_N"/>
</dbReference>
<dbReference type="InterPro" id="IPR012089">
    <property type="entry name" value="tRNA_Cyd_32_2_STrfase"/>
</dbReference>
<dbReference type="InterPro" id="IPR035107">
    <property type="entry name" value="tRNA_thiolation_TtcA_Ctu1"/>
</dbReference>
<dbReference type="NCBIfam" id="NF007972">
    <property type="entry name" value="PRK10696.1"/>
    <property type="match status" value="1"/>
</dbReference>
<dbReference type="PANTHER" id="PTHR43686:SF1">
    <property type="entry name" value="AMINOTRAN_5 DOMAIN-CONTAINING PROTEIN"/>
    <property type="match status" value="1"/>
</dbReference>
<dbReference type="PANTHER" id="PTHR43686">
    <property type="entry name" value="SULFURTRANSFERASE-RELATED"/>
    <property type="match status" value="1"/>
</dbReference>
<dbReference type="Pfam" id="PF01171">
    <property type="entry name" value="ATP_bind_3"/>
    <property type="match status" value="1"/>
</dbReference>
<dbReference type="PIRSF" id="PIRSF004976">
    <property type="entry name" value="ATPase_YdaO"/>
    <property type="match status" value="1"/>
</dbReference>
<dbReference type="SUPFAM" id="SSF52402">
    <property type="entry name" value="Adenine nucleotide alpha hydrolases-like"/>
    <property type="match status" value="1"/>
</dbReference>
<feature type="chain" id="PRO_0000348843" description="tRNA-cytidine(32) 2-sulfurtransferase">
    <location>
        <begin position="1"/>
        <end position="310"/>
    </location>
</feature>
<feature type="short sequence motif" description="PP-loop motif" evidence="1">
    <location>
        <begin position="45"/>
        <end position="50"/>
    </location>
</feature>
<feature type="binding site" evidence="1">
    <location>
        <position position="120"/>
    </location>
    <ligand>
        <name>[4Fe-4S] cluster</name>
        <dbReference type="ChEBI" id="CHEBI:49883"/>
    </ligand>
</feature>
<feature type="binding site" evidence="1">
    <location>
        <position position="123"/>
    </location>
    <ligand>
        <name>[4Fe-4S] cluster</name>
        <dbReference type="ChEBI" id="CHEBI:49883"/>
    </ligand>
</feature>
<feature type="binding site" evidence="1">
    <location>
        <position position="211"/>
    </location>
    <ligand>
        <name>[4Fe-4S] cluster</name>
        <dbReference type="ChEBI" id="CHEBI:49883"/>
    </ligand>
</feature>
<keyword id="KW-0004">4Fe-4S</keyword>
<keyword id="KW-0067">ATP-binding</keyword>
<keyword id="KW-0963">Cytoplasm</keyword>
<keyword id="KW-0408">Iron</keyword>
<keyword id="KW-0411">Iron-sulfur</keyword>
<keyword id="KW-0460">Magnesium</keyword>
<keyword id="KW-0479">Metal-binding</keyword>
<keyword id="KW-0547">Nucleotide-binding</keyword>
<keyword id="KW-0694">RNA-binding</keyword>
<keyword id="KW-0808">Transferase</keyword>
<keyword id="KW-0819">tRNA processing</keyword>
<keyword id="KW-0820">tRNA-binding</keyword>
<evidence type="ECO:0000255" key="1">
    <source>
        <dbReference type="HAMAP-Rule" id="MF_01850"/>
    </source>
</evidence>
<evidence type="ECO:0000305" key="2"/>